<feature type="chain" id="PRO_1000055651" description="Large ribosomal subunit protein uL14">
    <location>
        <begin position="1"/>
        <end position="122"/>
    </location>
</feature>
<sequence length="122" mass="13223">MIQMQSILQVADNTGARSLMCIKVLGGSKRRYAGIGDIIKVSVKDVAPRGRVKKGEVYNAVVVRTSKGVRRADGSLIKFDGNAAVLLNAKLEPIGTRIFGPVTRELRTARFMKIVSLAPEVL</sequence>
<comment type="function">
    <text evidence="1">Binds to 23S rRNA. Forms part of two intersubunit bridges in the 70S ribosome.</text>
</comment>
<comment type="subunit">
    <text evidence="1">Part of the 50S ribosomal subunit. Forms a cluster with proteins L3 and L19. In the 70S ribosome, L14 and L19 interact and together make contacts with the 16S rRNA in bridges B5 and B8.</text>
</comment>
<comment type="similarity">
    <text evidence="1">Belongs to the universal ribosomal protein uL14 family.</text>
</comment>
<gene>
    <name evidence="1" type="primary">rplN</name>
    <name type="ordered locus">Nmul_A0777</name>
</gene>
<protein>
    <recommendedName>
        <fullName evidence="1">Large ribosomal subunit protein uL14</fullName>
    </recommendedName>
    <alternativeName>
        <fullName evidence="2">50S ribosomal protein L14</fullName>
    </alternativeName>
</protein>
<organism>
    <name type="scientific">Nitrosospira multiformis (strain ATCC 25196 / NCIMB 11849 / C 71)</name>
    <dbReference type="NCBI Taxonomy" id="323848"/>
    <lineage>
        <taxon>Bacteria</taxon>
        <taxon>Pseudomonadati</taxon>
        <taxon>Pseudomonadota</taxon>
        <taxon>Betaproteobacteria</taxon>
        <taxon>Nitrosomonadales</taxon>
        <taxon>Nitrosomonadaceae</taxon>
        <taxon>Nitrosospira</taxon>
    </lineage>
</organism>
<keyword id="KW-1185">Reference proteome</keyword>
<keyword id="KW-0687">Ribonucleoprotein</keyword>
<keyword id="KW-0689">Ribosomal protein</keyword>
<keyword id="KW-0694">RNA-binding</keyword>
<keyword id="KW-0699">rRNA-binding</keyword>
<proteinExistence type="inferred from homology"/>
<dbReference type="EMBL" id="CP000103">
    <property type="protein sequence ID" value="ABB74084.1"/>
    <property type="molecule type" value="Genomic_DNA"/>
</dbReference>
<dbReference type="RefSeq" id="WP_011380133.1">
    <property type="nucleotide sequence ID" value="NC_007614.1"/>
</dbReference>
<dbReference type="SMR" id="Q2YAY7"/>
<dbReference type="STRING" id="323848.Nmul_A0777"/>
<dbReference type="KEGG" id="nmu:Nmul_A0777"/>
<dbReference type="eggNOG" id="COG0093">
    <property type="taxonomic scope" value="Bacteria"/>
</dbReference>
<dbReference type="HOGENOM" id="CLU_095071_2_1_4"/>
<dbReference type="OrthoDB" id="9806379at2"/>
<dbReference type="Proteomes" id="UP000002718">
    <property type="component" value="Chromosome"/>
</dbReference>
<dbReference type="GO" id="GO:0022625">
    <property type="term" value="C:cytosolic large ribosomal subunit"/>
    <property type="evidence" value="ECO:0007669"/>
    <property type="project" value="TreeGrafter"/>
</dbReference>
<dbReference type="GO" id="GO:0070180">
    <property type="term" value="F:large ribosomal subunit rRNA binding"/>
    <property type="evidence" value="ECO:0007669"/>
    <property type="project" value="TreeGrafter"/>
</dbReference>
<dbReference type="GO" id="GO:0003735">
    <property type="term" value="F:structural constituent of ribosome"/>
    <property type="evidence" value="ECO:0007669"/>
    <property type="project" value="InterPro"/>
</dbReference>
<dbReference type="GO" id="GO:0006412">
    <property type="term" value="P:translation"/>
    <property type="evidence" value="ECO:0007669"/>
    <property type="project" value="UniProtKB-UniRule"/>
</dbReference>
<dbReference type="CDD" id="cd00337">
    <property type="entry name" value="Ribosomal_uL14"/>
    <property type="match status" value="1"/>
</dbReference>
<dbReference type="FunFam" id="2.40.150.20:FF:000001">
    <property type="entry name" value="50S ribosomal protein L14"/>
    <property type="match status" value="1"/>
</dbReference>
<dbReference type="Gene3D" id="2.40.150.20">
    <property type="entry name" value="Ribosomal protein L14"/>
    <property type="match status" value="1"/>
</dbReference>
<dbReference type="HAMAP" id="MF_01367">
    <property type="entry name" value="Ribosomal_uL14"/>
    <property type="match status" value="1"/>
</dbReference>
<dbReference type="InterPro" id="IPR000218">
    <property type="entry name" value="Ribosomal_uL14"/>
</dbReference>
<dbReference type="InterPro" id="IPR005745">
    <property type="entry name" value="Ribosomal_uL14_bac-type"/>
</dbReference>
<dbReference type="InterPro" id="IPR019972">
    <property type="entry name" value="Ribosomal_uL14_CS"/>
</dbReference>
<dbReference type="InterPro" id="IPR036853">
    <property type="entry name" value="Ribosomal_uL14_sf"/>
</dbReference>
<dbReference type="NCBIfam" id="TIGR01067">
    <property type="entry name" value="rplN_bact"/>
    <property type="match status" value="1"/>
</dbReference>
<dbReference type="PANTHER" id="PTHR11761">
    <property type="entry name" value="50S/60S RIBOSOMAL PROTEIN L14/L23"/>
    <property type="match status" value="1"/>
</dbReference>
<dbReference type="PANTHER" id="PTHR11761:SF3">
    <property type="entry name" value="LARGE RIBOSOMAL SUBUNIT PROTEIN UL14M"/>
    <property type="match status" value="1"/>
</dbReference>
<dbReference type="Pfam" id="PF00238">
    <property type="entry name" value="Ribosomal_L14"/>
    <property type="match status" value="1"/>
</dbReference>
<dbReference type="SMART" id="SM01374">
    <property type="entry name" value="Ribosomal_L14"/>
    <property type="match status" value="1"/>
</dbReference>
<dbReference type="SUPFAM" id="SSF50193">
    <property type="entry name" value="Ribosomal protein L14"/>
    <property type="match status" value="1"/>
</dbReference>
<dbReference type="PROSITE" id="PS00049">
    <property type="entry name" value="RIBOSOMAL_L14"/>
    <property type="match status" value="1"/>
</dbReference>
<accession>Q2YAY7</accession>
<name>RL14_NITMU</name>
<reference key="1">
    <citation type="submission" date="2005-08" db="EMBL/GenBank/DDBJ databases">
        <title>Complete sequence of chromosome 1 of Nitrosospira multiformis ATCC 25196.</title>
        <authorList>
            <person name="Copeland A."/>
            <person name="Lucas S."/>
            <person name="Lapidus A."/>
            <person name="Barry K."/>
            <person name="Detter J.C."/>
            <person name="Glavina T."/>
            <person name="Hammon N."/>
            <person name="Israni S."/>
            <person name="Pitluck S."/>
            <person name="Chain P."/>
            <person name="Malfatti S."/>
            <person name="Shin M."/>
            <person name="Vergez L."/>
            <person name="Schmutz J."/>
            <person name="Larimer F."/>
            <person name="Land M."/>
            <person name="Hauser L."/>
            <person name="Kyrpides N."/>
            <person name="Lykidis A."/>
            <person name="Richardson P."/>
        </authorList>
    </citation>
    <scope>NUCLEOTIDE SEQUENCE [LARGE SCALE GENOMIC DNA]</scope>
    <source>
        <strain>ATCC 25196 / NCIMB 11849 / C 71</strain>
    </source>
</reference>
<evidence type="ECO:0000255" key="1">
    <source>
        <dbReference type="HAMAP-Rule" id="MF_01367"/>
    </source>
</evidence>
<evidence type="ECO:0000305" key="2"/>